<keyword id="KW-0004">4Fe-4S</keyword>
<keyword id="KW-0249">Electron transport</keyword>
<keyword id="KW-0408">Iron</keyword>
<keyword id="KW-0411">Iron-sulfur</keyword>
<keyword id="KW-0479">Metal-binding</keyword>
<keyword id="KW-0500">Molybdenum</keyword>
<keyword id="KW-0534">Nitrate assimilation</keyword>
<keyword id="KW-0560">Oxidoreductase</keyword>
<keyword id="KW-0574">Periplasm</keyword>
<keyword id="KW-1185">Reference proteome</keyword>
<keyword id="KW-0732">Signal</keyword>
<keyword id="KW-0813">Transport</keyword>
<dbReference type="EC" id="1.9.6.1" evidence="1"/>
<dbReference type="EMBL" id="AE017143">
    <property type="protein sequence ID" value="AAP95084.1"/>
    <property type="molecule type" value="Genomic_DNA"/>
</dbReference>
<dbReference type="RefSeq" id="WP_010944138.1">
    <property type="nucleotide sequence ID" value="NC_002940.2"/>
</dbReference>
<dbReference type="SMR" id="Q7VPJ7"/>
<dbReference type="STRING" id="233412.HD_0074"/>
<dbReference type="KEGG" id="hdu:HD_0074"/>
<dbReference type="eggNOG" id="COG0243">
    <property type="taxonomic scope" value="Bacteria"/>
</dbReference>
<dbReference type="HOGENOM" id="CLU_000422_13_4_6"/>
<dbReference type="OrthoDB" id="9816402at2"/>
<dbReference type="Proteomes" id="UP000001022">
    <property type="component" value="Chromosome"/>
</dbReference>
<dbReference type="GO" id="GO:0016020">
    <property type="term" value="C:membrane"/>
    <property type="evidence" value="ECO:0007669"/>
    <property type="project" value="TreeGrafter"/>
</dbReference>
<dbReference type="GO" id="GO:0009325">
    <property type="term" value="C:nitrate reductase complex"/>
    <property type="evidence" value="ECO:0007669"/>
    <property type="project" value="TreeGrafter"/>
</dbReference>
<dbReference type="GO" id="GO:0042597">
    <property type="term" value="C:periplasmic space"/>
    <property type="evidence" value="ECO:0007669"/>
    <property type="project" value="UniProtKB-SubCell"/>
</dbReference>
<dbReference type="GO" id="GO:0051539">
    <property type="term" value="F:4 iron, 4 sulfur cluster binding"/>
    <property type="evidence" value="ECO:0007669"/>
    <property type="project" value="UniProtKB-KW"/>
</dbReference>
<dbReference type="GO" id="GO:0009055">
    <property type="term" value="F:electron transfer activity"/>
    <property type="evidence" value="ECO:0007669"/>
    <property type="project" value="UniProtKB-UniRule"/>
</dbReference>
<dbReference type="GO" id="GO:0005506">
    <property type="term" value="F:iron ion binding"/>
    <property type="evidence" value="ECO:0007669"/>
    <property type="project" value="UniProtKB-UniRule"/>
</dbReference>
<dbReference type="GO" id="GO:0030151">
    <property type="term" value="F:molybdenum ion binding"/>
    <property type="evidence" value="ECO:0007669"/>
    <property type="project" value="InterPro"/>
</dbReference>
<dbReference type="GO" id="GO:0043546">
    <property type="term" value="F:molybdopterin cofactor binding"/>
    <property type="evidence" value="ECO:0007669"/>
    <property type="project" value="InterPro"/>
</dbReference>
<dbReference type="GO" id="GO:0050140">
    <property type="term" value="F:nitrate reductase (cytochrome) activity"/>
    <property type="evidence" value="ECO:0007669"/>
    <property type="project" value="UniProtKB-EC"/>
</dbReference>
<dbReference type="GO" id="GO:0045333">
    <property type="term" value="P:cellular respiration"/>
    <property type="evidence" value="ECO:0007669"/>
    <property type="project" value="UniProtKB-ARBA"/>
</dbReference>
<dbReference type="GO" id="GO:0006777">
    <property type="term" value="P:Mo-molybdopterin cofactor biosynthetic process"/>
    <property type="evidence" value="ECO:0007669"/>
    <property type="project" value="UniProtKB-UniRule"/>
</dbReference>
<dbReference type="GO" id="GO:0042128">
    <property type="term" value="P:nitrate assimilation"/>
    <property type="evidence" value="ECO:0007669"/>
    <property type="project" value="UniProtKB-UniRule"/>
</dbReference>
<dbReference type="CDD" id="cd02791">
    <property type="entry name" value="MopB_CT_Nitrate-R-NapA-like"/>
    <property type="match status" value="1"/>
</dbReference>
<dbReference type="CDD" id="cd02754">
    <property type="entry name" value="MopB_Nitrate-R-NapA-like"/>
    <property type="match status" value="1"/>
</dbReference>
<dbReference type="FunFam" id="2.40.40.20:FF:000005">
    <property type="entry name" value="Periplasmic nitrate reductase"/>
    <property type="match status" value="1"/>
</dbReference>
<dbReference type="Gene3D" id="2.40.40.20">
    <property type="match status" value="1"/>
</dbReference>
<dbReference type="Gene3D" id="3.30.200.210">
    <property type="match status" value="1"/>
</dbReference>
<dbReference type="Gene3D" id="3.40.50.740">
    <property type="match status" value="1"/>
</dbReference>
<dbReference type="Gene3D" id="3.40.228.10">
    <property type="entry name" value="Dimethylsulfoxide Reductase, domain 2"/>
    <property type="match status" value="1"/>
</dbReference>
<dbReference type="HAMAP" id="MF_01630">
    <property type="entry name" value="Nitrate_reduct_NapA"/>
    <property type="match status" value="1"/>
</dbReference>
<dbReference type="InterPro" id="IPR009010">
    <property type="entry name" value="Asp_de-COase-like_dom_sf"/>
</dbReference>
<dbReference type="InterPro" id="IPR041957">
    <property type="entry name" value="CT_Nitrate-R-NapA-like"/>
</dbReference>
<dbReference type="InterPro" id="IPR006657">
    <property type="entry name" value="MoPterin_dinucl-bd_dom"/>
</dbReference>
<dbReference type="InterPro" id="IPR006656">
    <property type="entry name" value="Mopterin_OxRdtase"/>
</dbReference>
<dbReference type="InterPro" id="IPR006963">
    <property type="entry name" value="Mopterin_OxRdtase_4Fe-4S_dom"/>
</dbReference>
<dbReference type="InterPro" id="IPR027467">
    <property type="entry name" value="MopterinOxRdtase_cofactor_BS"/>
</dbReference>
<dbReference type="InterPro" id="IPR010051">
    <property type="entry name" value="Periplasm_NO3_reductase_lsu"/>
</dbReference>
<dbReference type="InterPro" id="IPR050123">
    <property type="entry name" value="Prok_molybdopt-oxidoreductase"/>
</dbReference>
<dbReference type="InterPro" id="IPR006311">
    <property type="entry name" value="TAT_signal"/>
</dbReference>
<dbReference type="InterPro" id="IPR019546">
    <property type="entry name" value="TAT_signal_bac_arc"/>
</dbReference>
<dbReference type="NCBIfam" id="TIGR01706">
    <property type="entry name" value="NAPA"/>
    <property type="match status" value="1"/>
</dbReference>
<dbReference type="NCBIfam" id="NF010055">
    <property type="entry name" value="PRK13532.1"/>
    <property type="match status" value="1"/>
</dbReference>
<dbReference type="NCBIfam" id="TIGR01409">
    <property type="entry name" value="TAT_signal_seq"/>
    <property type="match status" value="1"/>
</dbReference>
<dbReference type="PANTHER" id="PTHR43105:SF11">
    <property type="entry name" value="PERIPLASMIC NITRATE REDUCTASE"/>
    <property type="match status" value="1"/>
</dbReference>
<dbReference type="PANTHER" id="PTHR43105">
    <property type="entry name" value="RESPIRATORY NITRATE REDUCTASE"/>
    <property type="match status" value="1"/>
</dbReference>
<dbReference type="Pfam" id="PF04879">
    <property type="entry name" value="Molybdop_Fe4S4"/>
    <property type="match status" value="1"/>
</dbReference>
<dbReference type="Pfam" id="PF00384">
    <property type="entry name" value="Molybdopterin"/>
    <property type="match status" value="1"/>
</dbReference>
<dbReference type="Pfam" id="PF01568">
    <property type="entry name" value="Molydop_binding"/>
    <property type="match status" value="1"/>
</dbReference>
<dbReference type="Pfam" id="PF10518">
    <property type="entry name" value="TAT_signal"/>
    <property type="match status" value="1"/>
</dbReference>
<dbReference type="SMART" id="SM00926">
    <property type="entry name" value="Molybdop_Fe4S4"/>
    <property type="match status" value="1"/>
</dbReference>
<dbReference type="SUPFAM" id="SSF50692">
    <property type="entry name" value="ADC-like"/>
    <property type="match status" value="1"/>
</dbReference>
<dbReference type="SUPFAM" id="SSF53706">
    <property type="entry name" value="Formate dehydrogenase/DMSO reductase, domains 1-3"/>
    <property type="match status" value="1"/>
</dbReference>
<dbReference type="PROSITE" id="PS51669">
    <property type="entry name" value="4FE4S_MOW_BIS_MGD"/>
    <property type="match status" value="1"/>
</dbReference>
<dbReference type="PROSITE" id="PS00551">
    <property type="entry name" value="MOLYBDOPTERIN_PROK_1"/>
    <property type="match status" value="1"/>
</dbReference>
<dbReference type="PROSITE" id="PS51318">
    <property type="entry name" value="TAT"/>
    <property type="match status" value="1"/>
</dbReference>
<protein>
    <recommendedName>
        <fullName evidence="1">Periplasmic nitrate reductase</fullName>
        <ecNumber evidence="1">1.9.6.1</ecNumber>
    </recommendedName>
</protein>
<name>NAPA_HAEDU</name>
<sequence length="827" mass="93202">MELSRRDFMKANAAVAAAAAAGIVLPVKNVQADDSGIKWDKAPCRFCGTGCSVLVGTKDGRVVATQGDPDAEVNRGLNCIKGYFLSKIMYGADRVQTPLLRMKDGKFHKEGDFTPVSWDQAFSIMAEKVKATLKAKGGNAVGMFSSGQTTIFEGYAKVKLWKAGLRSNTIDPNARHCMASAAVAFLRTFGMDEPMGCYNDIEKTDGFVLWGSNMAEMHPILWSRISDRRLSDNNVKVVVMSTFEHRSFELADTPIIFKPHSDLAILNYIANYIIQNDKVNWDFVNKHTKFKRGETDIGYGLRPEHPLQKAAKNVKNAGKMHDSSFEEFKKIVEPYTLEKAHEISGVPKHQLEALAKMYADPAQKLVSFWTMGFNQHTRGVWVNHMIYNVHLLTGKISTPGCGPFSLTGQPSACGTAREVGTFVHRLPADMVVMNPKHVEICEKAWKLPKGTIPTVPGYAAVMQSRMLKDGKLNFLWQMCTNNMQGGPNINEEIFPGWRNPENFIVVSDPYPSVSAVAADLILPTCMWVEKEGAYGNAERRTQFWYQQVKGPAQSKSDLWQIVEFAKYFKAEEVWNEELMAQMPEYRGKTLYEILYLNGEVDKYQVPTNIPGYLNDEADDFGFYIQKGLFEEYAQFGRGHGHDLADFETYHQARGLRWPVVDGKETLWRYREGFDPYVKAGEDFRFYGYPDGKAIILGVPYESPAESPDEEYDLWLSTGRVLEHWHTGTMTRRVPELHRSFPNNLVWMHPSDAKKRGLRHGDKVKVITRRGEMISHLDTRGRNKCPEGLIFTTFFDAGQLANKLTLDATDPISGETDFKKCAAKVVKA</sequence>
<accession>Q7VPJ7</accession>
<organism>
    <name type="scientific">Haemophilus ducreyi (strain 35000HP / ATCC 700724)</name>
    <dbReference type="NCBI Taxonomy" id="233412"/>
    <lineage>
        <taxon>Bacteria</taxon>
        <taxon>Pseudomonadati</taxon>
        <taxon>Pseudomonadota</taxon>
        <taxon>Gammaproteobacteria</taxon>
        <taxon>Pasteurellales</taxon>
        <taxon>Pasteurellaceae</taxon>
        <taxon>Haemophilus</taxon>
    </lineage>
</organism>
<comment type="function">
    <text evidence="1">Catalytic subunit of the periplasmic nitrate reductase complex NapAB. Receives electrons from NapB and catalyzes the reduction of nitrate to nitrite.</text>
</comment>
<comment type="catalytic activity">
    <reaction evidence="1">
        <text>2 Fe(II)-[cytochrome] + nitrate + 2 H(+) = 2 Fe(III)-[cytochrome] + nitrite + H2O</text>
        <dbReference type="Rhea" id="RHEA:12909"/>
        <dbReference type="Rhea" id="RHEA-COMP:11777"/>
        <dbReference type="Rhea" id="RHEA-COMP:11778"/>
        <dbReference type="ChEBI" id="CHEBI:15377"/>
        <dbReference type="ChEBI" id="CHEBI:15378"/>
        <dbReference type="ChEBI" id="CHEBI:16301"/>
        <dbReference type="ChEBI" id="CHEBI:17632"/>
        <dbReference type="ChEBI" id="CHEBI:29033"/>
        <dbReference type="ChEBI" id="CHEBI:29034"/>
        <dbReference type="EC" id="1.9.6.1"/>
    </reaction>
</comment>
<comment type="cofactor">
    <cofactor evidence="1">
        <name>[4Fe-4S] cluster</name>
        <dbReference type="ChEBI" id="CHEBI:49883"/>
    </cofactor>
    <text evidence="1">Binds 1 [4Fe-4S] cluster.</text>
</comment>
<comment type="cofactor">
    <cofactor evidence="1">
        <name>Mo-bis(molybdopterin guanine dinucleotide)</name>
        <dbReference type="ChEBI" id="CHEBI:60539"/>
    </cofactor>
    <text evidence="1">Binds 1 molybdenum-bis(molybdopterin guanine dinucleotide) (Mo-bis-MGD) cofactor per subunit.</text>
</comment>
<comment type="subunit">
    <text evidence="1">Component of the periplasmic nitrate reductase NapAB complex composed of NapA and NapB.</text>
</comment>
<comment type="subcellular location">
    <subcellularLocation>
        <location evidence="1">Periplasm</location>
    </subcellularLocation>
</comment>
<comment type="PTM">
    <text evidence="1">Predicted to be exported by the Tat system. The position of the signal peptide cleavage has not been experimentally proven.</text>
</comment>
<comment type="similarity">
    <text evidence="1">Belongs to the prokaryotic molybdopterin-containing oxidoreductase family. NasA/NapA/NarB subfamily.</text>
</comment>
<reference key="1">
    <citation type="submission" date="2003-06" db="EMBL/GenBank/DDBJ databases">
        <title>The complete genome sequence of Haemophilus ducreyi.</title>
        <authorList>
            <person name="Munson R.S. Jr."/>
            <person name="Ray W.C."/>
            <person name="Mahairas G."/>
            <person name="Sabo P."/>
            <person name="Mungur R."/>
            <person name="Johnson L."/>
            <person name="Nguyen D."/>
            <person name="Wang J."/>
            <person name="Forst C."/>
            <person name="Hood L."/>
        </authorList>
    </citation>
    <scope>NUCLEOTIDE SEQUENCE [LARGE SCALE GENOMIC DNA]</scope>
    <source>
        <strain>35000HP / ATCC 700724</strain>
    </source>
</reference>
<evidence type="ECO:0000255" key="1">
    <source>
        <dbReference type="HAMAP-Rule" id="MF_01630"/>
    </source>
</evidence>
<proteinExistence type="inferred from homology"/>
<gene>
    <name evidence="1" type="primary">napA</name>
    <name type="ordered locus">HD_0074</name>
</gene>
<feature type="signal peptide" description="Tat-type signal" evidence="1">
    <location>
        <begin position="1"/>
        <end position="32"/>
    </location>
</feature>
<feature type="chain" id="PRO_0000045987" description="Periplasmic nitrate reductase" evidence="1">
    <location>
        <begin position="33"/>
        <end position="827"/>
    </location>
</feature>
<feature type="domain" description="4Fe-4S Mo/W bis-MGD-type" evidence="1">
    <location>
        <begin position="37"/>
        <end position="93"/>
    </location>
</feature>
<feature type="binding site" evidence="1">
    <location>
        <position position="44"/>
    </location>
    <ligand>
        <name>[4Fe-4S] cluster</name>
        <dbReference type="ChEBI" id="CHEBI:49883"/>
    </ligand>
</feature>
<feature type="binding site" evidence="1">
    <location>
        <position position="47"/>
    </location>
    <ligand>
        <name>[4Fe-4S] cluster</name>
        <dbReference type="ChEBI" id="CHEBI:49883"/>
    </ligand>
</feature>
<feature type="binding site" evidence="1">
    <location>
        <position position="51"/>
    </location>
    <ligand>
        <name>[4Fe-4S] cluster</name>
        <dbReference type="ChEBI" id="CHEBI:49883"/>
    </ligand>
</feature>
<feature type="binding site" evidence="1">
    <location>
        <position position="79"/>
    </location>
    <ligand>
        <name>[4Fe-4S] cluster</name>
        <dbReference type="ChEBI" id="CHEBI:49883"/>
    </ligand>
</feature>
<feature type="binding site" evidence="1">
    <location>
        <position position="81"/>
    </location>
    <ligand>
        <name>Mo-bis(molybdopterin guanine dinucleotide)</name>
        <dbReference type="ChEBI" id="CHEBI:60539"/>
    </ligand>
</feature>
<feature type="binding site" evidence="1">
    <location>
        <position position="148"/>
    </location>
    <ligand>
        <name>Mo-bis(molybdopterin guanine dinucleotide)</name>
        <dbReference type="ChEBI" id="CHEBI:60539"/>
    </ligand>
</feature>
<feature type="binding site" evidence="1">
    <location>
        <position position="173"/>
    </location>
    <ligand>
        <name>Mo-bis(molybdopterin guanine dinucleotide)</name>
        <dbReference type="ChEBI" id="CHEBI:60539"/>
    </ligand>
</feature>
<feature type="binding site" evidence="1">
    <location>
        <position position="177"/>
    </location>
    <ligand>
        <name>Mo-bis(molybdopterin guanine dinucleotide)</name>
        <dbReference type="ChEBI" id="CHEBI:60539"/>
    </ligand>
</feature>
<feature type="binding site" evidence="1">
    <location>
        <begin position="210"/>
        <end position="217"/>
    </location>
    <ligand>
        <name>Mo-bis(molybdopterin guanine dinucleotide)</name>
        <dbReference type="ChEBI" id="CHEBI:60539"/>
    </ligand>
</feature>
<feature type="binding site" evidence="1">
    <location>
        <begin position="241"/>
        <end position="245"/>
    </location>
    <ligand>
        <name>Mo-bis(molybdopterin guanine dinucleotide)</name>
        <dbReference type="ChEBI" id="CHEBI:60539"/>
    </ligand>
</feature>
<feature type="binding site" evidence="1">
    <location>
        <position position="371"/>
    </location>
    <ligand>
        <name>Mo-bis(molybdopterin guanine dinucleotide)</name>
        <dbReference type="ChEBI" id="CHEBI:60539"/>
    </ligand>
</feature>
<feature type="binding site" evidence="1">
    <location>
        <position position="375"/>
    </location>
    <ligand>
        <name>Mo-bis(molybdopterin guanine dinucleotide)</name>
        <dbReference type="ChEBI" id="CHEBI:60539"/>
    </ligand>
</feature>
<feature type="binding site" evidence="1">
    <location>
        <position position="481"/>
    </location>
    <ligand>
        <name>Mo-bis(molybdopterin guanine dinucleotide)</name>
        <dbReference type="ChEBI" id="CHEBI:60539"/>
    </ligand>
</feature>
<feature type="binding site" evidence="1">
    <location>
        <begin position="507"/>
        <end position="508"/>
    </location>
    <ligand>
        <name>Mo-bis(molybdopterin guanine dinucleotide)</name>
        <dbReference type="ChEBI" id="CHEBI:60539"/>
    </ligand>
</feature>
<feature type="binding site" evidence="1">
    <location>
        <position position="530"/>
    </location>
    <ligand>
        <name>Mo-bis(molybdopterin guanine dinucleotide)</name>
        <dbReference type="ChEBI" id="CHEBI:60539"/>
    </ligand>
</feature>
<feature type="binding site" evidence="1">
    <location>
        <position position="557"/>
    </location>
    <ligand>
        <name>Mo-bis(molybdopterin guanine dinucleotide)</name>
        <dbReference type="ChEBI" id="CHEBI:60539"/>
    </ligand>
</feature>
<feature type="binding site" evidence="1">
    <location>
        <begin position="717"/>
        <end position="726"/>
    </location>
    <ligand>
        <name>Mo-bis(molybdopterin guanine dinucleotide)</name>
        <dbReference type="ChEBI" id="CHEBI:60539"/>
    </ligand>
</feature>
<feature type="binding site" evidence="1">
    <location>
        <position position="793"/>
    </location>
    <ligand>
        <name>substrate</name>
    </ligand>
</feature>
<feature type="binding site" evidence="1">
    <location>
        <position position="801"/>
    </location>
    <ligand>
        <name>Mo-bis(molybdopterin guanine dinucleotide)</name>
        <dbReference type="ChEBI" id="CHEBI:60539"/>
    </ligand>
</feature>
<feature type="binding site" evidence="1">
    <location>
        <position position="818"/>
    </location>
    <ligand>
        <name>Mo-bis(molybdopterin guanine dinucleotide)</name>
        <dbReference type="ChEBI" id="CHEBI:60539"/>
    </ligand>
</feature>